<accession>A5UL85</accession>
<evidence type="ECO:0000255" key="1">
    <source>
        <dbReference type="HAMAP-Rule" id="MF_00531"/>
    </source>
</evidence>
<evidence type="ECO:0000256" key="2">
    <source>
        <dbReference type="SAM" id="MobiDB-lite"/>
    </source>
</evidence>
<evidence type="ECO:0000305" key="3"/>
<gene>
    <name evidence="1" type="primary">rps19</name>
    <name type="ordered locus">Msm_0758</name>
</gene>
<organism>
    <name type="scientific">Methanobrevibacter smithii (strain ATCC 35061 / DSM 861 / OCM 144 / PS)</name>
    <dbReference type="NCBI Taxonomy" id="420247"/>
    <lineage>
        <taxon>Archaea</taxon>
        <taxon>Methanobacteriati</taxon>
        <taxon>Methanobacteriota</taxon>
        <taxon>Methanomada group</taxon>
        <taxon>Methanobacteria</taxon>
        <taxon>Methanobacteriales</taxon>
        <taxon>Methanobacteriaceae</taxon>
        <taxon>Methanobrevibacter</taxon>
    </lineage>
</organism>
<name>RS19_METS3</name>
<feature type="chain" id="PRO_1000051075" description="Small ribosomal subunit protein uS19">
    <location>
        <begin position="1"/>
        <end position="136"/>
    </location>
</feature>
<feature type="region of interest" description="Disordered" evidence="2">
    <location>
        <begin position="117"/>
        <end position="136"/>
    </location>
</feature>
<comment type="function">
    <text evidence="1">Protein S19 forms a complex with S13 that binds strongly to the 16S ribosomal RNA.</text>
</comment>
<comment type="similarity">
    <text evidence="1">Belongs to the universal ribosomal protein uS19 family.</text>
</comment>
<sequence length="136" mass="15704">MARKIFKYKGYTLEELQDMSLEEVMELFPARQRRSLKRGFLPRQQIVLDKMRKLNKEGSKDGRPVVIRTHCRDMIVLPEMVGTTFGIYNGQNFVEVTIEPEMIGCYFGEFAPTRQKVQHGDPGMGATRSSMFVPLK</sequence>
<protein>
    <recommendedName>
        <fullName evidence="1">Small ribosomal subunit protein uS19</fullName>
    </recommendedName>
    <alternativeName>
        <fullName evidence="3">30S ribosomal protein S19</fullName>
    </alternativeName>
</protein>
<keyword id="KW-0687">Ribonucleoprotein</keyword>
<keyword id="KW-0689">Ribosomal protein</keyword>
<keyword id="KW-0694">RNA-binding</keyword>
<keyword id="KW-0699">rRNA-binding</keyword>
<reference key="1">
    <citation type="journal article" date="2007" name="Proc. Natl. Acad. Sci. U.S.A.">
        <title>Genomic and metabolic adaptations of Methanobrevibacter smithii to the human gut.</title>
        <authorList>
            <person name="Samuel B.S."/>
            <person name="Hansen E.E."/>
            <person name="Manchester J.K."/>
            <person name="Coutinho P.M."/>
            <person name="Henrissat B."/>
            <person name="Fulton R."/>
            <person name="Latreille P."/>
            <person name="Kim K."/>
            <person name="Wilson R.K."/>
            <person name="Gordon J.I."/>
        </authorList>
    </citation>
    <scope>NUCLEOTIDE SEQUENCE [LARGE SCALE GENOMIC DNA]</scope>
    <source>
        <strain>ATCC 35061 / DSM 861 / OCM 144 / PS</strain>
    </source>
</reference>
<dbReference type="EMBL" id="CP000678">
    <property type="protein sequence ID" value="ABQ86963.1"/>
    <property type="molecule type" value="Genomic_DNA"/>
</dbReference>
<dbReference type="SMR" id="A5UL85"/>
<dbReference type="STRING" id="420247.Msm_0758"/>
<dbReference type="EnsemblBacteria" id="ABQ86963">
    <property type="protein sequence ID" value="ABQ86963"/>
    <property type="gene ID" value="Msm_0758"/>
</dbReference>
<dbReference type="KEGG" id="msi:Msm_0758"/>
<dbReference type="PATRIC" id="fig|420247.28.peg.755"/>
<dbReference type="eggNOG" id="arCOG04099">
    <property type="taxonomic scope" value="Archaea"/>
</dbReference>
<dbReference type="HOGENOM" id="CLU_097347_1_0_2"/>
<dbReference type="Proteomes" id="UP000001992">
    <property type="component" value="Chromosome"/>
</dbReference>
<dbReference type="GO" id="GO:0022627">
    <property type="term" value="C:cytosolic small ribosomal subunit"/>
    <property type="evidence" value="ECO:0007669"/>
    <property type="project" value="TreeGrafter"/>
</dbReference>
<dbReference type="GO" id="GO:0019843">
    <property type="term" value="F:rRNA binding"/>
    <property type="evidence" value="ECO:0007669"/>
    <property type="project" value="UniProtKB-UniRule"/>
</dbReference>
<dbReference type="GO" id="GO:0003735">
    <property type="term" value="F:structural constituent of ribosome"/>
    <property type="evidence" value="ECO:0007669"/>
    <property type="project" value="InterPro"/>
</dbReference>
<dbReference type="GO" id="GO:0000028">
    <property type="term" value="P:ribosomal small subunit assembly"/>
    <property type="evidence" value="ECO:0007669"/>
    <property type="project" value="TreeGrafter"/>
</dbReference>
<dbReference type="GO" id="GO:0006412">
    <property type="term" value="P:translation"/>
    <property type="evidence" value="ECO:0007669"/>
    <property type="project" value="UniProtKB-UniRule"/>
</dbReference>
<dbReference type="FunFam" id="3.30.860.10:FF:000002">
    <property type="entry name" value="40S ribosomal protein S15"/>
    <property type="match status" value="1"/>
</dbReference>
<dbReference type="Gene3D" id="3.30.860.10">
    <property type="entry name" value="30s Ribosomal Protein S19, Chain A"/>
    <property type="match status" value="1"/>
</dbReference>
<dbReference type="HAMAP" id="MF_00531">
    <property type="entry name" value="Ribosomal_uS19"/>
    <property type="match status" value="1"/>
</dbReference>
<dbReference type="InterPro" id="IPR002222">
    <property type="entry name" value="Ribosomal_uS19"/>
</dbReference>
<dbReference type="InterPro" id="IPR020934">
    <property type="entry name" value="Ribosomal_uS19_CS"/>
</dbReference>
<dbReference type="InterPro" id="IPR005713">
    <property type="entry name" value="Ribosomal_uS19_euk/arc"/>
</dbReference>
<dbReference type="InterPro" id="IPR023575">
    <property type="entry name" value="Ribosomal_uS19_SF"/>
</dbReference>
<dbReference type="NCBIfam" id="NF003121">
    <property type="entry name" value="PRK04038.1"/>
    <property type="match status" value="1"/>
</dbReference>
<dbReference type="NCBIfam" id="TIGR01025">
    <property type="entry name" value="uS19_arch"/>
    <property type="match status" value="1"/>
</dbReference>
<dbReference type="PANTHER" id="PTHR11880">
    <property type="entry name" value="RIBOSOMAL PROTEIN S19P FAMILY MEMBER"/>
    <property type="match status" value="1"/>
</dbReference>
<dbReference type="PANTHER" id="PTHR11880:SF2">
    <property type="entry name" value="SMALL RIBOSOMAL SUBUNIT PROTEIN US19"/>
    <property type="match status" value="1"/>
</dbReference>
<dbReference type="Pfam" id="PF00203">
    <property type="entry name" value="Ribosomal_S19"/>
    <property type="match status" value="1"/>
</dbReference>
<dbReference type="PIRSF" id="PIRSF002144">
    <property type="entry name" value="Ribosomal_S19"/>
    <property type="match status" value="1"/>
</dbReference>
<dbReference type="PRINTS" id="PR00975">
    <property type="entry name" value="RIBOSOMALS19"/>
</dbReference>
<dbReference type="SUPFAM" id="SSF54570">
    <property type="entry name" value="Ribosomal protein S19"/>
    <property type="match status" value="1"/>
</dbReference>
<dbReference type="PROSITE" id="PS00323">
    <property type="entry name" value="RIBOSOMAL_S19"/>
    <property type="match status" value="1"/>
</dbReference>
<proteinExistence type="inferred from homology"/>